<gene>
    <name evidence="1" type="primary">sepF</name>
    <name type="ordered locus">MRA_2162</name>
</gene>
<reference key="1">
    <citation type="journal article" date="2008" name="PLoS ONE">
        <title>Genetic basis of virulence attenuation revealed by comparative genomic analysis of Mycobacterium tuberculosis strain H37Ra versus H37Rv.</title>
        <authorList>
            <person name="Zheng H."/>
            <person name="Lu L."/>
            <person name="Wang B."/>
            <person name="Pu S."/>
            <person name="Zhang X."/>
            <person name="Zhu G."/>
            <person name="Shi W."/>
            <person name="Zhang L."/>
            <person name="Wang H."/>
            <person name="Wang S."/>
            <person name="Zhao G."/>
            <person name="Zhang Y."/>
        </authorList>
    </citation>
    <scope>NUCLEOTIDE SEQUENCE [LARGE SCALE GENOMIC DNA]</scope>
    <source>
        <strain>ATCC 25177 / H37Ra</strain>
    </source>
</reference>
<sequence>MSTLHKVKAYFGMAPMEDYDDEYYDDRAPSRGYARPRFDDDYGRYDGRDYDDARSDSRGDLRGEPADYPPPGYRGGYADEPRFRPREFDRAEMTRPRFGSWLRNSTRGALAMDPRRMAMMFEDGHPLSKITTLRPKDYSEARTIGERFRDGSPVIMDLVSMDNADAKRLVDFAAGLAFALRGSFDKVATKVFLLSPADVDVSPEERRRIAETGFYAYQ</sequence>
<proteinExistence type="inferred from homology"/>
<organism>
    <name type="scientific">Mycobacterium tuberculosis (strain ATCC 25177 / H37Ra)</name>
    <dbReference type="NCBI Taxonomy" id="419947"/>
    <lineage>
        <taxon>Bacteria</taxon>
        <taxon>Bacillati</taxon>
        <taxon>Actinomycetota</taxon>
        <taxon>Actinomycetes</taxon>
        <taxon>Mycobacteriales</taxon>
        <taxon>Mycobacteriaceae</taxon>
        <taxon>Mycobacterium</taxon>
        <taxon>Mycobacterium tuberculosis complex</taxon>
    </lineage>
</organism>
<protein>
    <recommendedName>
        <fullName evidence="1">Cell division protein SepF</fullName>
    </recommendedName>
</protein>
<evidence type="ECO:0000255" key="1">
    <source>
        <dbReference type="HAMAP-Rule" id="MF_01197"/>
    </source>
</evidence>
<evidence type="ECO:0000256" key="2">
    <source>
        <dbReference type="SAM" id="MobiDB-lite"/>
    </source>
</evidence>
<evidence type="ECO:0000305" key="3"/>
<dbReference type="EMBL" id="CP000611">
    <property type="protein sequence ID" value="ABQ73924.1"/>
    <property type="status" value="ALT_INIT"/>
    <property type="molecule type" value="Genomic_DNA"/>
</dbReference>
<dbReference type="RefSeq" id="WP_003411133.1">
    <property type="nucleotide sequence ID" value="NZ_CP016972.1"/>
</dbReference>
<dbReference type="SMR" id="A5U4H4"/>
<dbReference type="GeneID" id="45426125"/>
<dbReference type="KEGG" id="mra:MRA_2162"/>
<dbReference type="eggNOG" id="COG1799">
    <property type="taxonomic scope" value="Bacteria"/>
</dbReference>
<dbReference type="HOGENOM" id="CLU_078499_0_0_11"/>
<dbReference type="Proteomes" id="UP000001988">
    <property type="component" value="Chromosome"/>
</dbReference>
<dbReference type="GO" id="GO:0005737">
    <property type="term" value="C:cytoplasm"/>
    <property type="evidence" value="ECO:0007669"/>
    <property type="project" value="UniProtKB-SubCell"/>
</dbReference>
<dbReference type="GO" id="GO:0000917">
    <property type="term" value="P:division septum assembly"/>
    <property type="evidence" value="ECO:0007669"/>
    <property type="project" value="UniProtKB-KW"/>
</dbReference>
<dbReference type="GO" id="GO:0043093">
    <property type="term" value="P:FtsZ-dependent cytokinesis"/>
    <property type="evidence" value="ECO:0007669"/>
    <property type="project" value="UniProtKB-UniRule"/>
</dbReference>
<dbReference type="FunFam" id="3.30.110.150:FF:000001">
    <property type="entry name" value="Cell division protein SepF"/>
    <property type="match status" value="1"/>
</dbReference>
<dbReference type="Gene3D" id="3.30.110.150">
    <property type="entry name" value="SepF-like protein"/>
    <property type="match status" value="1"/>
</dbReference>
<dbReference type="HAMAP" id="MF_01197">
    <property type="entry name" value="SepF"/>
    <property type="match status" value="1"/>
</dbReference>
<dbReference type="InterPro" id="IPR023052">
    <property type="entry name" value="Cell_div_SepF"/>
</dbReference>
<dbReference type="InterPro" id="IPR007561">
    <property type="entry name" value="Cell_div_SepF/SepF-rel"/>
</dbReference>
<dbReference type="InterPro" id="IPR038594">
    <property type="entry name" value="SepF-like_sf"/>
</dbReference>
<dbReference type="PANTHER" id="PTHR35798">
    <property type="entry name" value="CELL DIVISION PROTEIN SEPF"/>
    <property type="match status" value="1"/>
</dbReference>
<dbReference type="PANTHER" id="PTHR35798:SF1">
    <property type="entry name" value="CELL DIVISION PROTEIN SEPF"/>
    <property type="match status" value="1"/>
</dbReference>
<dbReference type="Pfam" id="PF04472">
    <property type="entry name" value="SepF"/>
    <property type="match status" value="1"/>
</dbReference>
<comment type="function">
    <text evidence="1">Cell division protein that is part of the divisome complex and is recruited early to the Z-ring. Probably stimulates Z-ring formation, perhaps through the cross-linking of FtsZ protofilaments. Its function overlaps with FtsA.</text>
</comment>
<comment type="subunit">
    <text evidence="1">Homodimer. Interacts with FtsZ.</text>
</comment>
<comment type="subcellular location">
    <subcellularLocation>
        <location evidence="1">Cytoplasm</location>
    </subcellularLocation>
    <text evidence="1">Localizes to the division site, in a FtsZ-dependent manner.</text>
</comment>
<comment type="similarity">
    <text evidence="1">Belongs to the SepF family.</text>
</comment>
<comment type="sequence caution" evidence="3">
    <conflict type="erroneous initiation">
        <sequence resource="EMBL-CDS" id="ABQ73924"/>
    </conflict>
</comment>
<accession>A5U4H4</accession>
<name>SEPF_MYCTA</name>
<keyword id="KW-0131">Cell cycle</keyword>
<keyword id="KW-0132">Cell division</keyword>
<keyword id="KW-0963">Cytoplasm</keyword>
<keyword id="KW-1185">Reference proteome</keyword>
<keyword id="KW-0717">Septation</keyword>
<feature type="chain" id="PRO_0000334048" description="Cell division protein SepF">
    <location>
        <begin position="1"/>
        <end position="218"/>
    </location>
</feature>
<feature type="region of interest" description="Disordered" evidence="2">
    <location>
        <begin position="20"/>
        <end position="81"/>
    </location>
</feature>
<feature type="compositionally biased region" description="Basic and acidic residues" evidence="2">
    <location>
        <begin position="36"/>
        <end position="65"/>
    </location>
</feature>